<reference key="1">
    <citation type="journal article" date="1997" name="Biochem. Biophys. Res. Commun.">
        <title>Two forms of avian(chicken) TATA-binding protein mRNA generated by alternative polyadenylation.</title>
        <authorList>
            <person name="Yamauchi J."/>
            <person name="Sugita A."/>
            <person name="Fujiwara M."/>
            <person name="Suzuki K."/>
            <person name="Matsumoto H."/>
            <person name="Yamazaki T."/>
            <person name="Ninomiya Y."/>
            <person name="Ono T."/>
            <person name="Hasegawa T."/>
            <person name="Masushige S."/>
            <person name="Muramatsu M."/>
            <person name="Tamura T."/>
            <person name="Kato S."/>
        </authorList>
    </citation>
    <scope>NUCLEOTIDE SEQUENCE [GENOMIC DNA / MRNA]</scope>
    <source>
        <tissue>Liver</tissue>
    </source>
</reference>
<comment type="function">
    <text>General transcription factor that functions at the core of the DNA-binding multiprotein factor TFIID. Binding of TFIID to the TATA box is the initial transcriptional step of the pre-initiation complex (PIC), playing a role in the activation of eukaryotic genes transcribed by RNA polymerase II.</text>
</comment>
<comment type="subunit">
    <text evidence="1">Belongs to the TFIID complex together with the TBP-associated factors (TAFs). Binds DNA as monomer.</text>
</comment>
<comment type="subcellular location">
    <subcellularLocation>
        <location evidence="1">Nucleus</location>
    </subcellularLocation>
</comment>
<comment type="similarity">
    <text evidence="3">Belongs to the TBP family.</text>
</comment>
<proteinExistence type="evidence at transcript level"/>
<name>TBP_CHICK</name>
<organism>
    <name type="scientific">Gallus gallus</name>
    <name type="common">Chicken</name>
    <dbReference type="NCBI Taxonomy" id="9031"/>
    <lineage>
        <taxon>Eukaryota</taxon>
        <taxon>Metazoa</taxon>
        <taxon>Chordata</taxon>
        <taxon>Craniata</taxon>
        <taxon>Vertebrata</taxon>
        <taxon>Euteleostomi</taxon>
        <taxon>Archelosauria</taxon>
        <taxon>Archosauria</taxon>
        <taxon>Dinosauria</taxon>
        <taxon>Saurischia</taxon>
        <taxon>Theropoda</taxon>
        <taxon>Coelurosauria</taxon>
        <taxon>Aves</taxon>
        <taxon>Neognathae</taxon>
        <taxon>Galloanserae</taxon>
        <taxon>Galliformes</taxon>
        <taxon>Phasianidae</taxon>
        <taxon>Phasianinae</taxon>
        <taxon>Gallus</taxon>
    </lineage>
</organism>
<feature type="chain" id="PRO_0000153959" description="TATA-box-binding protein">
    <location>
        <begin position="1"/>
        <end position="302"/>
    </location>
</feature>
<feature type="repeat" description="1">
    <location>
        <begin position="128"/>
        <end position="204"/>
    </location>
</feature>
<feature type="repeat" description="2">
    <location>
        <begin position="218"/>
        <end position="295"/>
    </location>
</feature>
<feature type="region of interest" description="Disordered" evidence="2">
    <location>
        <begin position="1"/>
        <end position="20"/>
    </location>
</feature>
<feature type="region of interest" description="Disordered" evidence="2">
    <location>
        <begin position="53"/>
        <end position="121"/>
    </location>
</feature>
<feature type="compositionally biased region" description="Low complexity" evidence="2">
    <location>
        <begin position="57"/>
        <end position="81"/>
    </location>
</feature>
<feature type="compositionally biased region" description="Low complexity" evidence="2">
    <location>
        <begin position="89"/>
        <end position="101"/>
    </location>
</feature>
<feature type="compositionally biased region" description="Low complexity" evidence="2">
    <location>
        <begin position="109"/>
        <end position="119"/>
    </location>
</feature>
<sequence length="302" mass="33134">MDQNNSLPPYAQGLASPQGAMTPGIPIFSPMMPYGTGLTPQPVQSTNSLSILEEQQRQQQQQQAAQSSTSQQATQGTSGQTPQLFHSQTLTTAPLPGTTPLYPSPMTPMTPITPATPASESSGIVPQLQNIVSTVNLGCKLDLKTIALRARNAEYNPKRFAAVIMRIREPRTTALIFSSGKMVCTGAKSEEQSRLAARKYARVVQKLGFPAKFLDFKIQNMVGSCDVKFPIRLEGLVLTHQQFSSYEPELFPGLIYRMIKPRIVLLIFVSGKVVLTGAKVRAEIYEAFENIYPILKGFRKTT</sequence>
<dbReference type="EMBL" id="D83127">
    <property type="protein sequence ID" value="BAA20297.1"/>
    <property type="molecule type" value="mRNA"/>
</dbReference>
<dbReference type="EMBL" id="D83126">
    <property type="protein sequence ID" value="BAA20296.1"/>
    <property type="molecule type" value="mRNA"/>
</dbReference>
<dbReference type="EMBL" id="D83135">
    <property type="protein sequence ID" value="BAA20298.1"/>
    <property type="molecule type" value="Genomic_DNA"/>
</dbReference>
<dbReference type="PIR" id="JC5513">
    <property type="entry name" value="JC5513"/>
</dbReference>
<dbReference type="RefSeq" id="NP_990434.1">
    <property type="nucleotide sequence ID" value="NM_205103.1"/>
</dbReference>
<dbReference type="SMR" id="O13270"/>
<dbReference type="FunCoup" id="O13270">
    <property type="interactions" value="2780"/>
</dbReference>
<dbReference type="STRING" id="9031.ENSGALP00000060826"/>
<dbReference type="GlyGen" id="O13270">
    <property type="glycosylation" value="2 sites"/>
</dbReference>
<dbReference type="PaxDb" id="9031-ENSGALP00000036925"/>
<dbReference type="GeneID" id="395995"/>
<dbReference type="KEGG" id="gga:395995"/>
<dbReference type="CTD" id="6908"/>
<dbReference type="VEuPathDB" id="HostDB:geneid_395995"/>
<dbReference type="eggNOG" id="KOG3302">
    <property type="taxonomic scope" value="Eukaryota"/>
</dbReference>
<dbReference type="InParanoid" id="O13270"/>
<dbReference type="OrthoDB" id="2127950at2759"/>
<dbReference type="PhylomeDB" id="O13270"/>
<dbReference type="PRO" id="PR:O13270"/>
<dbReference type="Proteomes" id="UP000000539">
    <property type="component" value="Unassembled WGS sequence"/>
</dbReference>
<dbReference type="GO" id="GO:0005634">
    <property type="term" value="C:nucleus"/>
    <property type="evidence" value="ECO:0000250"/>
    <property type="project" value="UniProtKB"/>
</dbReference>
<dbReference type="GO" id="GO:0005669">
    <property type="term" value="C:transcription factor TFIID complex"/>
    <property type="evidence" value="ECO:0000250"/>
    <property type="project" value="UniProtKB"/>
</dbReference>
<dbReference type="GO" id="GO:0003677">
    <property type="term" value="F:DNA binding"/>
    <property type="evidence" value="ECO:0007669"/>
    <property type="project" value="UniProtKB-KW"/>
</dbReference>
<dbReference type="GO" id="GO:0016251">
    <property type="term" value="F:RNA polymerase II general transcription initiation factor activity"/>
    <property type="evidence" value="ECO:0000318"/>
    <property type="project" value="GO_Central"/>
</dbReference>
<dbReference type="GO" id="GO:0000995">
    <property type="term" value="F:RNA polymerase III general transcription initiation factor activity"/>
    <property type="evidence" value="ECO:0000250"/>
    <property type="project" value="UniProtKB"/>
</dbReference>
<dbReference type="GO" id="GO:0006352">
    <property type="term" value="P:DNA-templated transcription initiation"/>
    <property type="evidence" value="ECO:0000318"/>
    <property type="project" value="GO_Central"/>
</dbReference>
<dbReference type="GO" id="GO:0006366">
    <property type="term" value="P:transcription by RNA polymerase II"/>
    <property type="evidence" value="ECO:0000250"/>
    <property type="project" value="UniProtKB"/>
</dbReference>
<dbReference type="GO" id="GO:0006383">
    <property type="term" value="P:transcription by RNA polymerase III"/>
    <property type="evidence" value="ECO:0000250"/>
    <property type="project" value="UniProtKB"/>
</dbReference>
<dbReference type="CDD" id="cd04516">
    <property type="entry name" value="TBP_eukaryotes"/>
    <property type="match status" value="1"/>
</dbReference>
<dbReference type="FunFam" id="3.30.310.10:FF:000001">
    <property type="entry name" value="TATA-box-binding protein 2"/>
    <property type="match status" value="1"/>
</dbReference>
<dbReference type="FunFam" id="3.30.310.10:FF:000002">
    <property type="entry name" value="TATA-box-binding protein 2"/>
    <property type="match status" value="1"/>
</dbReference>
<dbReference type="Gene3D" id="3.30.310.10">
    <property type="entry name" value="TATA-Binding Protein"/>
    <property type="match status" value="2"/>
</dbReference>
<dbReference type="HAMAP" id="MF_00408">
    <property type="entry name" value="TATA_bind_prot_arch"/>
    <property type="match status" value="1"/>
</dbReference>
<dbReference type="InterPro" id="IPR000814">
    <property type="entry name" value="TBP"/>
</dbReference>
<dbReference type="InterPro" id="IPR030491">
    <property type="entry name" value="TBP_CS"/>
</dbReference>
<dbReference type="InterPro" id="IPR012295">
    <property type="entry name" value="TBP_dom_sf"/>
</dbReference>
<dbReference type="InterPro" id="IPR033710">
    <property type="entry name" value="TBP_eukaryotic"/>
</dbReference>
<dbReference type="PANTHER" id="PTHR10126">
    <property type="entry name" value="TATA-BOX BINDING PROTEIN"/>
    <property type="match status" value="1"/>
</dbReference>
<dbReference type="Pfam" id="PF00352">
    <property type="entry name" value="TBP"/>
    <property type="match status" value="2"/>
</dbReference>
<dbReference type="PRINTS" id="PR00686">
    <property type="entry name" value="TIFACTORIID"/>
</dbReference>
<dbReference type="SUPFAM" id="SSF55945">
    <property type="entry name" value="TATA-box binding protein-like"/>
    <property type="match status" value="2"/>
</dbReference>
<dbReference type="PROSITE" id="PS00351">
    <property type="entry name" value="TFIID"/>
    <property type="match status" value="2"/>
</dbReference>
<accession>O13270</accession>
<protein>
    <recommendedName>
        <fullName>TATA-box-binding protein</fullName>
    </recommendedName>
    <alternativeName>
        <fullName>TATA sequence-binding protein</fullName>
    </alternativeName>
    <alternativeName>
        <fullName>TATA-binding factor</fullName>
    </alternativeName>
    <alternativeName>
        <fullName>TATA-box factor</fullName>
    </alternativeName>
    <alternativeName>
        <fullName>Transcription initiation factor TFIID TBP subunit</fullName>
    </alternativeName>
</protein>
<evidence type="ECO:0000250" key="1">
    <source>
        <dbReference type="UniProtKB" id="P20226"/>
    </source>
</evidence>
<evidence type="ECO:0000256" key="2">
    <source>
        <dbReference type="SAM" id="MobiDB-lite"/>
    </source>
</evidence>
<evidence type="ECO:0000305" key="3"/>
<keyword id="KW-0238">DNA-binding</keyword>
<keyword id="KW-0539">Nucleus</keyword>
<keyword id="KW-1185">Reference proteome</keyword>
<keyword id="KW-0677">Repeat</keyword>
<keyword id="KW-0804">Transcription</keyword>
<gene>
    <name type="primary">TBP</name>
</gene>